<protein>
    <recommendedName>
        <fullName>Deoxyhypusine synthase</fullName>
        <ecNumber>2.5.1.46</ecNumber>
    </recommendedName>
</protein>
<keyword id="KW-0386">Hypusine biosynthesis</keyword>
<keyword id="KW-0520">NAD</keyword>
<keyword id="KW-1185">Reference proteome</keyword>
<keyword id="KW-0808">Transferase</keyword>
<evidence type="ECO:0000250" key="1"/>
<evidence type="ECO:0000305" key="2"/>
<proteinExistence type="evidence at transcript level"/>
<name>DHYS_TOBAC</name>
<organism>
    <name type="scientific">Nicotiana tabacum</name>
    <name type="common">Common tobacco</name>
    <dbReference type="NCBI Taxonomy" id="4097"/>
    <lineage>
        <taxon>Eukaryota</taxon>
        <taxon>Viridiplantae</taxon>
        <taxon>Streptophyta</taxon>
        <taxon>Embryophyta</taxon>
        <taxon>Tracheophyta</taxon>
        <taxon>Spermatophyta</taxon>
        <taxon>Magnoliopsida</taxon>
        <taxon>eudicotyledons</taxon>
        <taxon>Gunneridae</taxon>
        <taxon>Pentapetalae</taxon>
        <taxon>asterids</taxon>
        <taxon>lamiids</taxon>
        <taxon>Solanales</taxon>
        <taxon>Solanaceae</taxon>
        <taxon>Nicotianoideae</taxon>
        <taxon>Nicotianeae</taxon>
        <taxon>Nicotiana</taxon>
    </lineage>
</organism>
<gene>
    <name type="primary">DHS1</name>
</gene>
<accession>Q9SC80</accession>
<reference key="1">
    <citation type="journal article" date="1999" name="J. Biol. Chem.">
        <title>Deoxyhypusine synthase from tobacco. cDNA isolation, characterization, and bacterial expression of an enzyme with extended substrate specificity.</title>
        <authorList>
            <person name="Ober D."/>
            <person name="Hartmann T."/>
        </authorList>
    </citation>
    <scope>NUCLEOTIDE SEQUENCE [MRNA]</scope>
    <source>
        <tissue>Leaf</tissue>
    </source>
</reference>
<feature type="chain" id="PRO_0000134479" description="Deoxyhypusine synthase">
    <location>
        <begin position="1"/>
        <end position="379"/>
    </location>
</feature>
<feature type="active site" description="Nucleophile" evidence="1">
    <location>
        <position position="339"/>
    </location>
</feature>
<feature type="binding site" evidence="1">
    <location>
        <begin position="104"/>
        <end position="108"/>
    </location>
    <ligand>
        <name>NAD(+)</name>
        <dbReference type="ChEBI" id="CHEBI:57540"/>
    </ligand>
</feature>
<feature type="binding site" evidence="1">
    <location>
        <begin position="130"/>
        <end position="132"/>
    </location>
    <ligand>
        <name>NAD(+)</name>
        <dbReference type="ChEBI" id="CHEBI:57540"/>
    </ligand>
</feature>
<feature type="binding site" evidence="1">
    <location>
        <begin position="135"/>
        <end position="136"/>
    </location>
    <ligand>
        <name>spermidine</name>
        <dbReference type="ChEBI" id="CHEBI:57834"/>
    </ligand>
</feature>
<feature type="binding site" evidence="1">
    <location>
        <position position="136"/>
    </location>
    <ligand>
        <name>NAD(+)</name>
        <dbReference type="ChEBI" id="CHEBI:57540"/>
    </ligand>
</feature>
<feature type="binding site" evidence="1">
    <location>
        <position position="237"/>
    </location>
    <ligand>
        <name>NAD(+)</name>
        <dbReference type="ChEBI" id="CHEBI:57540"/>
    </ligand>
</feature>
<feature type="binding site" evidence="1">
    <location>
        <position position="242"/>
    </location>
    <ligand>
        <name>spermidine</name>
        <dbReference type="ChEBI" id="CHEBI:57834"/>
    </ligand>
</feature>
<feature type="binding site" evidence="1">
    <location>
        <position position="293"/>
    </location>
    <ligand>
        <name>NAD(+)</name>
        <dbReference type="ChEBI" id="CHEBI:57540"/>
    </ligand>
</feature>
<feature type="binding site" evidence="1">
    <location>
        <position position="298"/>
    </location>
    <ligand>
        <name>spermidine</name>
        <dbReference type="ChEBI" id="CHEBI:57834"/>
    </ligand>
</feature>
<feature type="binding site" evidence="1">
    <location>
        <begin position="318"/>
        <end position="319"/>
    </location>
    <ligand>
        <name>NAD(+)</name>
        <dbReference type="ChEBI" id="CHEBI:57540"/>
    </ligand>
</feature>
<feature type="binding site" evidence="1">
    <location>
        <begin position="324"/>
        <end position="326"/>
    </location>
    <ligand>
        <name>spermidine</name>
        <dbReference type="ChEBI" id="CHEBI:57834"/>
    </ligand>
</feature>
<feature type="binding site" evidence="1">
    <location>
        <begin position="333"/>
        <end position="339"/>
    </location>
    <ligand>
        <name>spermidine</name>
        <dbReference type="ChEBI" id="CHEBI:57834"/>
    </ligand>
</feature>
<feature type="binding site" evidence="1">
    <location>
        <begin position="352"/>
        <end position="353"/>
    </location>
    <ligand>
        <name>NAD(+)</name>
        <dbReference type="ChEBI" id="CHEBI:57540"/>
    </ligand>
</feature>
<sequence length="379" mass="42083">MGEALNVMESVRSIVFKESENLEGSATKIEGYDFNKGVNYAELFKSMASTGFQAANLGDAIQIVNQMLDWRLSHEQPMEDCSEEERDVAYRESVTCKIFLGFTSNLVSSGVRDTIRYLVQHRMVDVVVTTAGGIEEDLIKCLAPTYKGDFSLPGAVLRSKGLNRIGNLLVPNDNYCKFENWIIPIFDQMYEEQIKEKVLWTPSKVIARLAKEINDETSYLYWAYKNRIPVFCPGLTDGSLGDMLYFHSFKKGDPDNPDLNPGLIIDIVGDIRAMNSEAVHAGSRKTGMIILGGGLPKHHVCNANMMRNGADFAVYINTAQEFDGSDSGARPDEAVSWGKIRGGAKTVKVHCDATIAFPILVAETFAAKRKELSHIRCQV</sequence>
<dbReference type="EC" id="2.5.1.46"/>
<dbReference type="EMBL" id="AJ242017">
    <property type="protein sequence ID" value="CAB62400.1"/>
    <property type="molecule type" value="mRNA"/>
</dbReference>
<dbReference type="RefSeq" id="NP_001312549.1">
    <property type="nucleotide sequence ID" value="NM_001325620.1"/>
</dbReference>
<dbReference type="SMR" id="Q9SC80"/>
<dbReference type="STRING" id="4097.Q9SC80"/>
<dbReference type="PaxDb" id="4097-Q9SC80"/>
<dbReference type="GeneID" id="107796463"/>
<dbReference type="KEGG" id="ag:CAB62400"/>
<dbReference type="KEGG" id="nta:107796463"/>
<dbReference type="OrthoDB" id="294378at2759"/>
<dbReference type="BioCyc" id="MetaCyc:MONOMER-13914"/>
<dbReference type="BRENDA" id="2.5.1.46">
    <property type="organism ID" value="3645"/>
</dbReference>
<dbReference type="UniPathway" id="UPA00354"/>
<dbReference type="Proteomes" id="UP000084051">
    <property type="component" value="Unplaced"/>
</dbReference>
<dbReference type="GO" id="GO:0005737">
    <property type="term" value="C:cytoplasm"/>
    <property type="evidence" value="ECO:0000318"/>
    <property type="project" value="GO_Central"/>
</dbReference>
<dbReference type="GO" id="GO:0034038">
    <property type="term" value="F:deoxyhypusine synthase activity"/>
    <property type="evidence" value="ECO:0000318"/>
    <property type="project" value="GO_Central"/>
</dbReference>
<dbReference type="GO" id="GO:0008216">
    <property type="term" value="P:spermidine metabolic process"/>
    <property type="evidence" value="ECO:0000318"/>
    <property type="project" value="GO_Central"/>
</dbReference>
<dbReference type="FunFam" id="3.40.910.10:FF:000002">
    <property type="entry name" value="Deoxyhypusine synthase"/>
    <property type="match status" value="1"/>
</dbReference>
<dbReference type="Gene3D" id="3.40.910.10">
    <property type="entry name" value="Deoxyhypusine synthase"/>
    <property type="match status" value="1"/>
</dbReference>
<dbReference type="InterPro" id="IPR002773">
    <property type="entry name" value="Deoxyhypusine_synthase"/>
</dbReference>
<dbReference type="InterPro" id="IPR036982">
    <property type="entry name" value="Deoxyhypusine_synthase_sf"/>
</dbReference>
<dbReference type="InterPro" id="IPR029035">
    <property type="entry name" value="DHS-like_NAD/FAD-binding_dom"/>
</dbReference>
<dbReference type="NCBIfam" id="TIGR00321">
    <property type="entry name" value="dhys"/>
    <property type="match status" value="1"/>
</dbReference>
<dbReference type="PANTHER" id="PTHR11703">
    <property type="entry name" value="DEOXYHYPUSINE SYNTHASE"/>
    <property type="match status" value="1"/>
</dbReference>
<dbReference type="PANTHER" id="PTHR11703:SF0">
    <property type="entry name" value="DEOXYHYPUSINE SYNTHASE"/>
    <property type="match status" value="1"/>
</dbReference>
<dbReference type="Pfam" id="PF01916">
    <property type="entry name" value="DS"/>
    <property type="match status" value="1"/>
</dbReference>
<dbReference type="SUPFAM" id="SSF52467">
    <property type="entry name" value="DHS-like NAD/FAD-binding domain"/>
    <property type="match status" value="1"/>
</dbReference>
<comment type="function">
    <text>Catalyzes the NAD-dependent oxidative cleavage of spermidine and the subsequent transfer of the butylamine moiety of spermidine to the epsilon-amino group of a specific lysine residue of the eIF-5A precursor protein to form the intermediate deoxyhypusine residue. Also able to produce homospermidine from putrescine.</text>
</comment>
<comment type="catalytic activity">
    <reaction>
        <text>[eIF5A protein]-L-lysine + spermidine = [eIF5A protein]-deoxyhypusine + propane-1,3-diamine</text>
        <dbReference type="Rhea" id="RHEA:33299"/>
        <dbReference type="Rhea" id="RHEA-COMP:10143"/>
        <dbReference type="Rhea" id="RHEA-COMP:10144"/>
        <dbReference type="ChEBI" id="CHEBI:29969"/>
        <dbReference type="ChEBI" id="CHEBI:57484"/>
        <dbReference type="ChEBI" id="CHEBI:57834"/>
        <dbReference type="ChEBI" id="CHEBI:82657"/>
        <dbReference type="EC" id="2.5.1.46"/>
    </reaction>
</comment>
<comment type="cofactor">
    <cofactor>
        <name>NAD(+)</name>
        <dbReference type="ChEBI" id="CHEBI:57540"/>
    </cofactor>
</comment>
<comment type="pathway">
    <text>Protein modification; eIF5A hypusination.</text>
</comment>
<comment type="subunit">
    <text>Homotetramer.</text>
</comment>
<comment type="similarity">
    <text evidence="2">Belongs to the deoxyhypusine synthase family.</text>
</comment>